<name>UBPB_DICDI</name>
<feature type="chain" id="PRO_0000389021" description="Ubiquitin hydrolase B">
    <location>
        <begin position="1"/>
        <end position="451"/>
    </location>
</feature>
<feature type="domain" description="USP">
    <location>
        <begin position="19"/>
        <end position="450"/>
    </location>
</feature>
<feature type="region of interest" description="Disordered" evidence="2">
    <location>
        <begin position="83"/>
        <end position="154"/>
    </location>
</feature>
<feature type="compositionally biased region" description="Low complexity" evidence="2">
    <location>
        <begin position="83"/>
        <end position="115"/>
    </location>
</feature>
<feature type="compositionally biased region" description="Polar residues" evidence="2">
    <location>
        <begin position="116"/>
        <end position="135"/>
    </location>
</feature>
<feature type="active site" description="Nucleophile" evidence="1">
    <location>
        <position position="399"/>
    </location>
</feature>
<feature type="active site" description="Proton acceptor" evidence="1">
    <location>
        <position position="408"/>
    </location>
</feature>
<organism>
    <name type="scientific">Dictyostelium discoideum</name>
    <name type="common">Social amoeba</name>
    <dbReference type="NCBI Taxonomy" id="44689"/>
    <lineage>
        <taxon>Eukaryota</taxon>
        <taxon>Amoebozoa</taxon>
        <taxon>Evosea</taxon>
        <taxon>Eumycetozoa</taxon>
        <taxon>Dictyostelia</taxon>
        <taxon>Dictyosteliales</taxon>
        <taxon>Dictyosteliaceae</taxon>
        <taxon>Dictyostelium</taxon>
    </lineage>
</organism>
<proteinExistence type="evidence at protein level"/>
<evidence type="ECO:0000255" key="1">
    <source>
        <dbReference type="PROSITE-ProRule" id="PRU10093"/>
    </source>
</evidence>
<evidence type="ECO:0000256" key="2">
    <source>
        <dbReference type="SAM" id="MobiDB-lite"/>
    </source>
</evidence>
<evidence type="ECO:0000269" key="3">
    <source>
    </source>
</evidence>
<evidence type="ECO:0000305" key="4"/>
<gene>
    <name type="primary">ubpB</name>
    <name type="ORF">DDB_G0275021</name>
</gene>
<reference key="1">
    <citation type="journal article" date="1998" name="Genes Dev.">
        <title>A novel, putative MEK kinase controls developmental timing and spatial patterning in Dictyostelium and is regulated by ubiquitin-mediated protein degradation.</title>
        <authorList>
            <person name="Chung C.Y."/>
            <person name="Reddy T.B.K."/>
            <person name="Zhou K."/>
            <person name="Firtel R.A."/>
        </authorList>
    </citation>
    <scope>NUCLEOTIDE SEQUENCE [MRNA]</scope>
    <scope>FUNCTION</scope>
    <scope>INTERACTION WITH MKKA</scope>
    <scope>DEVELOPMENTAL STAGE</scope>
    <scope>DISRUPTION PHENOTYPE</scope>
    <source>
        <strain>AX3</strain>
    </source>
</reference>
<reference key="2">
    <citation type="journal article" date="2002" name="Nature">
        <title>Sequence and analysis of chromosome 2 of Dictyostelium discoideum.</title>
        <authorList>
            <person name="Gloeckner G."/>
            <person name="Eichinger L."/>
            <person name="Szafranski K."/>
            <person name="Pachebat J.A."/>
            <person name="Bankier A.T."/>
            <person name="Dear P.H."/>
            <person name="Lehmann R."/>
            <person name="Baumgart C."/>
            <person name="Parra G."/>
            <person name="Abril J.F."/>
            <person name="Guigo R."/>
            <person name="Kumpf K."/>
            <person name="Tunggal B."/>
            <person name="Cox E.C."/>
            <person name="Quail M.A."/>
            <person name="Platzer M."/>
            <person name="Rosenthal A."/>
            <person name="Noegel A.A."/>
        </authorList>
    </citation>
    <scope>NUCLEOTIDE SEQUENCE [LARGE SCALE GENOMIC DNA]</scope>
    <source>
        <strain>AX4</strain>
    </source>
</reference>
<reference key="3">
    <citation type="journal article" date="2005" name="Nature">
        <title>The genome of the social amoeba Dictyostelium discoideum.</title>
        <authorList>
            <person name="Eichinger L."/>
            <person name="Pachebat J.A."/>
            <person name="Gloeckner G."/>
            <person name="Rajandream M.A."/>
            <person name="Sucgang R."/>
            <person name="Berriman M."/>
            <person name="Song J."/>
            <person name="Olsen R."/>
            <person name="Szafranski K."/>
            <person name="Xu Q."/>
            <person name="Tunggal B."/>
            <person name="Kummerfeld S."/>
            <person name="Madera M."/>
            <person name="Konfortov B.A."/>
            <person name="Rivero F."/>
            <person name="Bankier A.T."/>
            <person name="Lehmann R."/>
            <person name="Hamlin N."/>
            <person name="Davies R."/>
            <person name="Gaudet P."/>
            <person name="Fey P."/>
            <person name="Pilcher K."/>
            <person name="Chen G."/>
            <person name="Saunders D."/>
            <person name="Sodergren E.J."/>
            <person name="Davis P."/>
            <person name="Kerhornou A."/>
            <person name="Nie X."/>
            <person name="Hall N."/>
            <person name="Anjard C."/>
            <person name="Hemphill L."/>
            <person name="Bason N."/>
            <person name="Farbrother P."/>
            <person name="Desany B."/>
            <person name="Just E."/>
            <person name="Morio T."/>
            <person name="Rost R."/>
            <person name="Churcher C.M."/>
            <person name="Cooper J."/>
            <person name="Haydock S."/>
            <person name="van Driessche N."/>
            <person name="Cronin A."/>
            <person name="Goodhead I."/>
            <person name="Muzny D.M."/>
            <person name="Mourier T."/>
            <person name="Pain A."/>
            <person name="Lu M."/>
            <person name="Harper D."/>
            <person name="Lindsay R."/>
            <person name="Hauser H."/>
            <person name="James K.D."/>
            <person name="Quiles M."/>
            <person name="Madan Babu M."/>
            <person name="Saito T."/>
            <person name="Buchrieser C."/>
            <person name="Wardroper A."/>
            <person name="Felder M."/>
            <person name="Thangavelu M."/>
            <person name="Johnson D."/>
            <person name="Knights A."/>
            <person name="Loulseged H."/>
            <person name="Mungall K.L."/>
            <person name="Oliver K."/>
            <person name="Price C."/>
            <person name="Quail M.A."/>
            <person name="Urushihara H."/>
            <person name="Hernandez J."/>
            <person name="Rabbinowitsch E."/>
            <person name="Steffen D."/>
            <person name="Sanders M."/>
            <person name="Ma J."/>
            <person name="Kohara Y."/>
            <person name="Sharp S."/>
            <person name="Simmonds M.N."/>
            <person name="Spiegler S."/>
            <person name="Tivey A."/>
            <person name="Sugano S."/>
            <person name="White B."/>
            <person name="Walker D."/>
            <person name="Woodward J.R."/>
            <person name="Winckler T."/>
            <person name="Tanaka Y."/>
            <person name="Shaulsky G."/>
            <person name="Schleicher M."/>
            <person name="Weinstock G.M."/>
            <person name="Rosenthal A."/>
            <person name="Cox E.C."/>
            <person name="Chisholm R.L."/>
            <person name="Gibbs R.A."/>
            <person name="Loomis W.F."/>
            <person name="Platzer M."/>
            <person name="Kay R.R."/>
            <person name="Williams J.G."/>
            <person name="Dear P.H."/>
            <person name="Noegel A.A."/>
            <person name="Barrell B.G."/>
            <person name="Kuspa A."/>
        </authorList>
    </citation>
    <scope>NUCLEOTIDE SEQUENCE [LARGE SCALE GENOMIC DNA]</scope>
    <source>
        <strain>AX4</strain>
    </source>
</reference>
<comment type="function">
    <text evidence="3">Required for proper prespore cell patterning. Plays a role in stabilizing mkkA by preventing it from being targeted for degradation. ubcB and ubpB differentially control ubiquitination/deubiquitination and degradation of mkkA in a cell-type-specific and temporally regulated manner.</text>
</comment>
<comment type="catalytic activity">
    <reaction>
        <text>Thiol-dependent hydrolysis of ester, thioester, amide, peptide and isopeptide bonds formed by the C-terminal Gly of ubiquitin (a 76-residue protein attached to proteins as an intracellular targeting signal).</text>
        <dbReference type="EC" id="3.4.19.12"/>
    </reaction>
</comment>
<comment type="subunit">
    <text evidence="3">Interacts with mkkA (via F-box/WD40 domains).</text>
</comment>
<comment type="developmental stage">
    <text evidence="3">Found at low levels in vegetative cells and at higher levels during aggregation and mound formation (4 and 8 hours of development).</text>
</comment>
<comment type="disruption phenotype">
    <text evidence="3">Null cells differentiate into prestalk cells preferentially. They develop precociously and exhibit abnormal cell-type patterning with an increase in the prestalk domain and reduction in the prespore domain in the slug, and spore domain in a fruiting body. Null cells do not form the normal spherical sori seen in mature wild-type fruiting bodies. Instead, the sori remain elongated, similar to those seen in wild-type fruiting bodies that are not fully mature. The upper and lower cups of the fruiting body, which are derived from prestalk cells and anterior-like cells, are enlarged. The spore-containing region is reduced. Null cells form fruiting bodies at approximately 17 hours and exhibit precocious expression of the spore marker. The expression levels of the prespore/spore markers are lower in null cells compared to wild-type cells, whereas expression of the prestalk/stalk marker is elevated slightly. The loss of gene function, might lead to increased mkkA ubiquitination and a more rapid turnover of mkkA. This should result in a reduced level of mkkA activity, producing the above mentioned mkkA null cell type phenotype.</text>
</comment>
<comment type="similarity">
    <text evidence="4">Belongs to the peptidase C19 family.</text>
</comment>
<sequence length="451" mass="51134">MKNIEEMPSKSQLVAHRSRGLINTSNTCFMNVILQSLTGCQLFLRVIKNLSDLEDLGKYPTLHSFNQFYTEYFSNPTSNILNNNSNSTTTTSSSSTTATTTSTSNNNKSQTPTSPIQQHHQSQTNGLSNQPSVATQSQQQQQPQPPINPKHFNDLVKSFNSKVSPVPQTTVSPHSMVQVSKKKLKLQLYNNSLPQTICQQDAQEFLVFLLDLIHEEFLTLIKDIDIPKEDDKSTPTSTSIVDDNWEVVGKKGKTAIITNSQQELPKTPISQIFSGVLRSSFNRTGSKESITVEPFYCLHLDIRPEEINSLEDALKFFMKPEIIEGYTCSTKKIEISASKSWSFESLPRILIVHFKRFAFESDTSKKLDKLIRFPTQLSLSTASNHQTQKKYSLFSVVSHHGRGLSQGHYTCDIYQPQQAQWIRYDDSTFTEVKEQDVLNREAYLLLYQLVN</sequence>
<keyword id="KW-0378">Hydrolase</keyword>
<keyword id="KW-0645">Protease</keyword>
<keyword id="KW-1185">Reference proteome</keyword>
<keyword id="KW-0788">Thiol protease</keyword>
<keyword id="KW-0833">Ubl conjugation pathway</keyword>
<dbReference type="EC" id="3.4.19.12"/>
<dbReference type="EMBL" id="AF093690">
    <property type="protein sequence ID" value="AAC97115.1"/>
    <property type="molecule type" value="mRNA"/>
</dbReference>
<dbReference type="EMBL" id="AAFI02000013">
    <property type="protein sequence ID" value="EAL69791.1"/>
    <property type="status" value="ALT_TERM"/>
    <property type="molecule type" value="Genomic_DNA"/>
</dbReference>
<dbReference type="RefSeq" id="XP_643807.1">
    <property type="nucleotide sequence ID" value="XM_638715.1"/>
</dbReference>
<dbReference type="SMR" id="O96612"/>
<dbReference type="FunCoup" id="O96612">
    <property type="interactions" value="3"/>
</dbReference>
<dbReference type="STRING" id="44689.O96612"/>
<dbReference type="MEROPS" id="C19.A68"/>
<dbReference type="PaxDb" id="44689-DDB0191402"/>
<dbReference type="EnsemblProtists" id="EAL69791">
    <property type="protein sequence ID" value="EAL69791"/>
    <property type="gene ID" value="DDB_G0275021"/>
</dbReference>
<dbReference type="GeneID" id="8619853"/>
<dbReference type="KEGG" id="ddi:DDB_G0275021"/>
<dbReference type="dictyBase" id="DDB_G0275021">
    <property type="gene designation" value="ubpB"/>
</dbReference>
<dbReference type="VEuPathDB" id="AmoebaDB:DDB_G0275021"/>
<dbReference type="eggNOG" id="KOG1871">
    <property type="taxonomic scope" value="Eukaryota"/>
</dbReference>
<dbReference type="HOGENOM" id="CLU_008279_7_0_1"/>
<dbReference type="InParanoid" id="O96612"/>
<dbReference type="OMA" id="INTSNTC"/>
<dbReference type="PhylomeDB" id="O96612"/>
<dbReference type="Reactome" id="R-DDI-1358803">
    <property type="pathway name" value="Downregulation of ERBB2:ERBB3 signaling"/>
</dbReference>
<dbReference type="PRO" id="PR:O96612"/>
<dbReference type="Proteomes" id="UP000002195">
    <property type="component" value="Chromosome 2"/>
</dbReference>
<dbReference type="GO" id="GO:0004843">
    <property type="term" value="F:cysteine-type deubiquitinase activity"/>
    <property type="evidence" value="ECO:0007669"/>
    <property type="project" value="UniProtKB-EC"/>
</dbReference>
<dbReference type="GO" id="GO:0016579">
    <property type="term" value="P:protein deubiquitination"/>
    <property type="evidence" value="ECO:0000314"/>
    <property type="project" value="dictyBase"/>
</dbReference>
<dbReference type="GO" id="GO:0006508">
    <property type="term" value="P:proteolysis"/>
    <property type="evidence" value="ECO:0007669"/>
    <property type="project" value="UniProtKB-KW"/>
</dbReference>
<dbReference type="CDD" id="cd02257">
    <property type="entry name" value="Peptidase_C19"/>
    <property type="match status" value="1"/>
</dbReference>
<dbReference type="Gene3D" id="3.90.70.10">
    <property type="entry name" value="Cysteine proteinases"/>
    <property type="match status" value="1"/>
</dbReference>
<dbReference type="InterPro" id="IPR038765">
    <property type="entry name" value="Papain-like_cys_pep_sf"/>
</dbReference>
<dbReference type="InterPro" id="IPR050164">
    <property type="entry name" value="Peptidase_C19"/>
</dbReference>
<dbReference type="InterPro" id="IPR001394">
    <property type="entry name" value="Peptidase_C19_UCH"/>
</dbReference>
<dbReference type="InterPro" id="IPR018200">
    <property type="entry name" value="USP_CS"/>
</dbReference>
<dbReference type="InterPro" id="IPR028889">
    <property type="entry name" value="USP_dom"/>
</dbReference>
<dbReference type="PANTHER" id="PTHR24006">
    <property type="entry name" value="UBIQUITIN CARBOXYL-TERMINAL HYDROLASE"/>
    <property type="match status" value="1"/>
</dbReference>
<dbReference type="PANTHER" id="PTHR24006:SF687">
    <property type="entry name" value="UBIQUITIN CARBOXYL-TERMINAL HYDROLASE 10"/>
    <property type="match status" value="1"/>
</dbReference>
<dbReference type="Pfam" id="PF00443">
    <property type="entry name" value="UCH"/>
    <property type="match status" value="1"/>
</dbReference>
<dbReference type="SUPFAM" id="SSF54001">
    <property type="entry name" value="Cysteine proteinases"/>
    <property type="match status" value="1"/>
</dbReference>
<dbReference type="PROSITE" id="PS00973">
    <property type="entry name" value="USP_2"/>
    <property type="match status" value="1"/>
</dbReference>
<dbReference type="PROSITE" id="PS50235">
    <property type="entry name" value="USP_3"/>
    <property type="match status" value="1"/>
</dbReference>
<protein>
    <recommendedName>
        <fullName>Ubiquitin hydrolase B</fullName>
        <ecNumber>3.4.19.12</ecNumber>
    </recommendedName>
</protein>
<accession>O96612</accession>
<accession>Q554A4</accession>
<accession>Q869X4</accession>